<name>FLIJ_BUCAP</name>
<feature type="chain" id="PRO_0000180898" description="Flagellar FliJ protein">
    <location>
        <begin position="1"/>
        <end position="152"/>
    </location>
</feature>
<accession>Q8KA41</accession>
<protein>
    <recommendedName>
        <fullName>Flagellar FliJ protein</fullName>
    </recommendedName>
</protein>
<proteinExistence type="inferred from homology"/>
<organism>
    <name type="scientific">Buchnera aphidicola subsp. Schizaphis graminum (strain Sg)</name>
    <dbReference type="NCBI Taxonomy" id="198804"/>
    <lineage>
        <taxon>Bacteria</taxon>
        <taxon>Pseudomonadati</taxon>
        <taxon>Pseudomonadota</taxon>
        <taxon>Gammaproteobacteria</taxon>
        <taxon>Enterobacterales</taxon>
        <taxon>Erwiniaceae</taxon>
        <taxon>Buchnera</taxon>
    </lineage>
</organism>
<evidence type="ECO:0000250" key="1"/>
<evidence type="ECO:0000305" key="2"/>
<gene>
    <name type="primary">fliJ</name>
    <name type="ordered locus">BUsg_071</name>
</gene>
<keyword id="KW-1005">Bacterial flagellum biogenesis</keyword>
<keyword id="KW-1006">Bacterial flagellum protein export</keyword>
<keyword id="KW-1003">Cell membrane</keyword>
<keyword id="KW-0145">Chemotaxis</keyword>
<keyword id="KW-0472">Membrane</keyword>
<keyword id="KW-0653">Protein transport</keyword>
<keyword id="KW-0813">Transport</keyword>
<sequence>MKYKKKIFSILENLEKKNIEKDIINIKNLYLQKEKYVTQLSLLKDYQNEYLIKLKSKIELGICLYQWRNYNNFIFILYFLIKDNEQKIKKNQKILEKSLKQYSKNQIKLKTWNYLYKKYKKKEIKKILLVEEMISDEFSQLKNLAEGSCYNV</sequence>
<comment type="function">
    <text evidence="1">Flagellar protein that affects chemotactic events.</text>
</comment>
<comment type="subcellular location">
    <subcellularLocation>
        <location evidence="1">Cell membrane</location>
        <topology evidence="1">Peripheral membrane protein</topology>
        <orientation evidence="1">Cytoplasmic side</orientation>
    </subcellularLocation>
</comment>
<comment type="similarity">
    <text evidence="2">Belongs to the FliJ family.</text>
</comment>
<reference key="1">
    <citation type="journal article" date="2002" name="Science">
        <title>50 million years of genomic stasis in endosymbiotic bacteria.</title>
        <authorList>
            <person name="Tamas I."/>
            <person name="Klasson L."/>
            <person name="Canbaeck B."/>
            <person name="Naeslund A.K."/>
            <person name="Eriksson A.-S."/>
            <person name="Wernegreen J.J."/>
            <person name="Sandstroem J.P."/>
            <person name="Moran N.A."/>
            <person name="Andersson S.G.E."/>
        </authorList>
    </citation>
    <scope>NUCLEOTIDE SEQUENCE [LARGE SCALE GENOMIC DNA]</scope>
    <source>
        <strain>Sg</strain>
    </source>
</reference>
<dbReference type="EMBL" id="AE013218">
    <property type="protein sequence ID" value="AAM67641.1"/>
    <property type="molecule type" value="Genomic_DNA"/>
</dbReference>
<dbReference type="RefSeq" id="WP_011053607.1">
    <property type="nucleotide sequence ID" value="NC_004061.1"/>
</dbReference>
<dbReference type="SMR" id="Q8KA41"/>
<dbReference type="STRING" id="198804.BUsg_071"/>
<dbReference type="GeneID" id="93003541"/>
<dbReference type="KEGG" id="bas:BUsg_071"/>
<dbReference type="eggNOG" id="COG2882">
    <property type="taxonomic scope" value="Bacteria"/>
</dbReference>
<dbReference type="HOGENOM" id="CLU_1764545_0_0_6"/>
<dbReference type="Proteomes" id="UP000000416">
    <property type="component" value="Chromosome"/>
</dbReference>
<dbReference type="GO" id="GO:0009288">
    <property type="term" value="C:bacterial-type flagellum"/>
    <property type="evidence" value="ECO:0007669"/>
    <property type="project" value="InterPro"/>
</dbReference>
<dbReference type="GO" id="GO:0005886">
    <property type="term" value="C:plasma membrane"/>
    <property type="evidence" value="ECO:0007669"/>
    <property type="project" value="UniProtKB-SubCell"/>
</dbReference>
<dbReference type="GO" id="GO:0044781">
    <property type="term" value="P:bacterial-type flagellum organization"/>
    <property type="evidence" value="ECO:0007669"/>
    <property type="project" value="UniProtKB-KW"/>
</dbReference>
<dbReference type="GO" id="GO:0071973">
    <property type="term" value="P:bacterial-type flagellum-dependent cell motility"/>
    <property type="evidence" value="ECO:0007669"/>
    <property type="project" value="InterPro"/>
</dbReference>
<dbReference type="GO" id="GO:0006935">
    <property type="term" value="P:chemotaxis"/>
    <property type="evidence" value="ECO:0007669"/>
    <property type="project" value="UniProtKB-KW"/>
</dbReference>
<dbReference type="GO" id="GO:0015031">
    <property type="term" value="P:protein transport"/>
    <property type="evidence" value="ECO:0007669"/>
    <property type="project" value="UniProtKB-KW"/>
</dbReference>
<dbReference type="Gene3D" id="1.10.287.1700">
    <property type="match status" value="1"/>
</dbReference>
<dbReference type="InterPro" id="IPR053716">
    <property type="entry name" value="Flag_assembly_chemotaxis_eff"/>
</dbReference>
<dbReference type="InterPro" id="IPR012823">
    <property type="entry name" value="Flagell_FliJ"/>
</dbReference>
<dbReference type="InterPro" id="IPR052570">
    <property type="entry name" value="FliJ"/>
</dbReference>
<dbReference type="PANTHER" id="PTHR38786">
    <property type="entry name" value="FLAGELLAR FLIJ PROTEIN"/>
    <property type="match status" value="1"/>
</dbReference>
<dbReference type="PANTHER" id="PTHR38786:SF1">
    <property type="entry name" value="FLAGELLAR FLIJ PROTEIN"/>
    <property type="match status" value="1"/>
</dbReference>
<dbReference type="Pfam" id="PF02050">
    <property type="entry name" value="FliJ"/>
    <property type="match status" value="1"/>
</dbReference>